<proteinExistence type="inferred from homology"/>
<sequence length="161" mass="18424">MQTIEQQITNVIEESLTDMGFELVLVKFKGVNPKVVEILIDSLNGEKISVEDCTKASRTISAILDVEDLIEDAYSLEVASSGLERPLVKFENYNRFLGREVKIKLKELLNGKTRYQGKIIKAKNNKIYLKCEEQEVLIDYDLIKNANLVLTEEVFKKLLKQ</sequence>
<keyword id="KW-0963">Cytoplasm</keyword>
<keyword id="KW-0690">Ribosome biogenesis</keyword>
<evidence type="ECO:0000255" key="1">
    <source>
        <dbReference type="HAMAP-Rule" id="MF_01077"/>
    </source>
</evidence>
<organism>
    <name type="scientific">Rickettsia felis (strain ATCC VR-1525 / URRWXCal2)</name>
    <name type="common">Rickettsia azadi</name>
    <dbReference type="NCBI Taxonomy" id="315456"/>
    <lineage>
        <taxon>Bacteria</taxon>
        <taxon>Pseudomonadati</taxon>
        <taxon>Pseudomonadota</taxon>
        <taxon>Alphaproteobacteria</taxon>
        <taxon>Rickettsiales</taxon>
        <taxon>Rickettsiaceae</taxon>
        <taxon>Rickettsieae</taxon>
        <taxon>Rickettsia</taxon>
        <taxon>spotted fever group</taxon>
    </lineage>
</organism>
<protein>
    <recommendedName>
        <fullName evidence="1">Ribosome maturation factor RimP</fullName>
    </recommendedName>
</protein>
<accession>Q4UL49</accession>
<reference key="1">
    <citation type="journal article" date="2005" name="PLoS Biol.">
        <title>The genome sequence of Rickettsia felis identifies the first putative conjugative plasmid in an obligate intracellular parasite.</title>
        <authorList>
            <person name="Ogata H."/>
            <person name="Renesto P."/>
            <person name="Audic S."/>
            <person name="Robert C."/>
            <person name="Blanc G."/>
            <person name="Fournier P.-E."/>
            <person name="Parinello H."/>
            <person name="Claverie J.-M."/>
            <person name="Raoult D."/>
        </authorList>
    </citation>
    <scope>NUCLEOTIDE SEQUENCE [LARGE SCALE GENOMIC DNA]</scope>
    <source>
        <strain>ATCC VR-1525 / URRWXCal2</strain>
    </source>
</reference>
<dbReference type="EMBL" id="CP000053">
    <property type="protein sequence ID" value="AAY61724.1"/>
    <property type="molecule type" value="Genomic_DNA"/>
</dbReference>
<dbReference type="SMR" id="Q4UL49"/>
<dbReference type="STRING" id="315456.RF_0873"/>
<dbReference type="KEGG" id="rfe:RF_0873"/>
<dbReference type="eggNOG" id="COG0779">
    <property type="taxonomic scope" value="Bacteria"/>
</dbReference>
<dbReference type="HOGENOM" id="CLU_070525_0_2_5"/>
<dbReference type="OrthoDB" id="9805006at2"/>
<dbReference type="Proteomes" id="UP000008548">
    <property type="component" value="Chromosome"/>
</dbReference>
<dbReference type="GO" id="GO:0005829">
    <property type="term" value="C:cytosol"/>
    <property type="evidence" value="ECO:0007669"/>
    <property type="project" value="TreeGrafter"/>
</dbReference>
<dbReference type="GO" id="GO:0000028">
    <property type="term" value="P:ribosomal small subunit assembly"/>
    <property type="evidence" value="ECO:0007669"/>
    <property type="project" value="TreeGrafter"/>
</dbReference>
<dbReference type="GO" id="GO:0006412">
    <property type="term" value="P:translation"/>
    <property type="evidence" value="ECO:0007669"/>
    <property type="project" value="TreeGrafter"/>
</dbReference>
<dbReference type="CDD" id="cd01734">
    <property type="entry name" value="YlxS_C"/>
    <property type="match status" value="1"/>
</dbReference>
<dbReference type="FunFam" id="3.30.300.70:FF:000001">
    <property type="entry name" value="Ribosome maturation factor RimP"/>
    <property type="match status" value="1"/>
</dbReference>
<dbReference type="Gene3D" id="2.30.30.180">
    <property type="entry name" value="Ribosome maturation factor RimP, C-terminal domain"/>
    <property type="match status" value="1"/>
</dbReference>
<dbReference type="Gene3D" id="3.30.300.70">
    <property type="entry name" value="RimP-like superfamily, N-terminal"/>
    <property type="match status" value="1"/>
</dbReference>
<dbReference type="HAMAP" id="MF_01077">
    <property type="entry name" value="RimP"/>
    <property type="match status" value="1"/>
</dbReference>
<dbReference type="InterPro" id="IPR003728">
    <property type="entry name" value="Ribosome_maturation_RimP"/>
</dbReference>
<dbReference type="InterPro" id="IPR028998">
    <property type="entry name" value="RimP_C"/>
</dbReference>
<dbReference type="InterPro" id="IPR036847">
    <property type="entry name" value="RimP_C_sf"/>
</dbReference>
<dbReference type="InterPro" id="IPR028989">
    <property type="entry name" value="RimP_N"/>
</dbReference>
<dbReference type="InterPro" id="IPR035956">
    <property type="entry name" value="RimP_N_sf"/>
</dbReference>
<dbReference type="NCBIfam" id="NF000937">
    <property type="entry name" value="PRK00092.4-3"/>
    <property type="match status" value="1"/>
</dbReference>
<dbReference type="PANTHER" id="PTHR33867">
    <property type="entry name" value="RIBOSOME MATURATION FACTOR RIMP"/>
    <property type="match status" value="1"/>
</dbReference>
<dbReference type="PANTHER" id="PTHR33867:SF1">
    <property type="entry name" value="RIBOSOME MATURATION FACTOR RIMP"/>
    <property type="match status" value="1"/>
</dbReference>
<dbReference type="Pfam" id="PF17384">
    <property type="entry name" value="DUF150_C"/>
    <property type="match status" value="1"/>
</dbReference>
<dbReference type="Pfam" id="PF02576">
    <property type="entry name" value="RimP_N"/>
    <property type="match status" value="1"/>
</dbReference>
<dbReference type="SUPFAM" id="SSF74942">
    <property type="entry name" value="YhbC-like, C-terminal domain"/>
    <property type="match status" value="1"/>
</dbReference>
<dbReference type="SUPFAM" id="SSF75420">
    <property type="entry name" value="YhbC-like, N-terminal domain"/>
    <property type="match status" value="1"/>
</dbReference>
<gene>
    <name evidence="1" type="primary">rimP</name>
    <name type="ordered locus">RF_0873</name>
</gene>
<feature type="chain" id="PRO_0000229272" description="Ribosome maturation factor RimP">
    <location>
        <begin position="1"/>
        <end position="161"/>
    </location>
</feature>
<comment type="function">
    <text evidence="1">Required for maturation of 30S ribosomal subunits.</text>
</comment>
<comment type="subcellular location">
    <subcellularLocation>
        <location evidence="1">Cytoplasm</location>
    </subcellularLocation>
</comment>
<comment type="similarity">
    <text evidence="1">Belongs to the RimP family.</text>
</comment>
<name>RIMP_RICFE</name>